<organism>
    <name type="scientific">Chelativorans sp. (strain BNC1)</name>
    <dbReference type="NCBI Taxonomy" id="266779"/>
    <lineage>
        <taxon>Bacteria</taxon>
        <taxon>Pseudomonadati</taxon>
        <taxon>Pseudomonadota</taxon>
        <taxon>Alphaproteobacteria</taxon>
        <taxon>Hyphomicrobiales</taxon>
        <taxon>Phyllobacteriaceae</taxon>
        <taxon>Chelativorans</taxon>
    </lineage>
</organism>
<evidence type="ECO:0000255" key="1">
    <source>
        <dbReference type="HAMAP-Rule" id="MF_00328"/>
    </source>
</evidence>
<feature type="chain" id="PRO_0000266347" description="Guanylate kinase">
    <location>
        <begin position="1"/>
        <end position="218"/>
    </location>
</feature>
<feature type="domain" description="Guanylate kinase-like" evidence="1">
    <location>
        <begin position="14"/>
        <end position="193"/>
    </location>
</feature>
<feature type="binding site" evidence="1">
    <location>
        <begin position="21"/>
        <end position="28"/>
    </location>
    <ligand>
        <name>ATP</name>
        <dbReference type="ChEBI" id="CHEBI:30616"/>
    </ligand>
</feature>
<sequence length="218" mass="24890">MESASPSATIRRRGVMLVLSSPSGAGKSTIARSLLENDHEFELSVSVTTRPRRPSEIEGVHYHFKTQRDFEMMRDGGDLLEWAEVHGNCYGTPRGPVERAIAGGRDMLFDIDWQGAAQLREKMPDDIVSVFILPPTMKELLARLTRRAEDTPEIIERRLRNAHHEIEQWRDYDYVVINDDLDRAFASVRAIVSAERLRHERRPGLEDFVAGLLAERPE</sequence>
<reference key="1">
    <citation type="submission" date="2006-06" db="EMBL/GenBank/DDBJ databases">
        <title>Complete sequence of chromosome of Mesorhizobium sp. BNC1.</title>
        <authorList>
            <consortium name="US DOE Joint Genome Institute"/>
            <person name="Copeland A."/>
            <person name="Lucas S."/>
            <person name="Lapidus A."/>
            <person name="Barry K."/>
            <person name="Detter J.C."/>
            <person name="Glavina del Rio T."/>
            <person name="Hammon N."/>
            <person name="Israni S."/>
            <person name="Dalin E."/>
            <person name="Tice H."/>
            <person name="Pitluck S."/>
            <person name="Chertkov O."/>
            <person name="Brettin T."/>
            <person name="Bruce D."/>
            <person name="Han C."/>
            <person name="Tapia R."/>
            <person name="Gilna P."/>
            <person name="Schmutz J."/>
            <person name="Larimer F."/>
            <person name="Land M."/>
            <person name="Hauser L."/>
            <person name="Kyrpides N."/>
            <person name="Mikhailova N."/>
            <person name="Richardson P."/>
        </authorList>
    </citation>
    <scope>NUCLEOTIDE SEQUENCE [LARGE SCALE GENOMIC DNA]</scope>
    <source>
        <strain>BNC1</strain>
    </source>
</reference>
<keyword id="KW-0067">ATP-binding</keyword>
<keyword id="KW-0963">Cytoplasm</keyword>
<keyword id="KW-0418">Kinase</keyword>
<keyword id="KW-0547">Nucleotide-binding</keyword>
<keyword id="KW-0808">Transferase</keyword>
<comment type="function">
    <text evidence="1">Essential for recycling GMP and indirectly, cGMP.</text>
</comment>
<comment type="catalytic activity">
    <reaction evidence="1">
        <text>GMP + ATP = GDP + ADP</text>
        <dbReference type="Rhea" id="RHEA:20780"/>
        <dbReference type="ChEBI" id="CHEBI:30616"/>
        <dbReference type="ChEBI" id="CHEBI:58115"/>
        <dbReference type="ChEBI" id="CHEBI:58189"/>
        <dbReference type="ChEBI" id="CHEBI:456216"/>
        <dbReference type="EC" id="2.7.4.8"/>
    </reaction>
</comment>
<comment type="subcellular location">
    <subcellularLocation>
        <location evidence="1">Cytoplasm</location>
    </subcellularLocation>
</comment>
<comment type="similarity">
    <text evidence="1">Belongs to the guanylate kinase family.</text>
</comment>
<name>KGUA_CHESB</name>
<protein>
    <recommendedName>
        <fullName evidence="1">Guanylate kinase</fullName>
        <ecNumber evidence="1">2.7.4.8</ecNumber>
    </recommendedName>
    <alternativeName>
        <fullName evidence="1">GMP kinase</fullName>
    </alternativeName>
</protein>
<proteinExistence type="inferred from homology"/>
<accession>Q11HG8</accession>
<gene>
    <name evidence="1" type="primary">gmk</name>
    <name type="ordered locus">Meso_1763</name>
</gene>
<dbReference type="EC" id="2.7.4.8" evidence="1"/>
<dbReference type="EMBL" id="CP000390">
    <property type="protein sequence ID" value="ABG63157.1"/>
    <property type="molecule type" value="Genomic_DNA"/>
</dbReference>
<dbReference type="SMR" id="Q11HG8"/>
<dbReference type="STRING" id="266779.Meso_1763"/>
<dbReference type="KEGG" id="mes:Meso_1763"/>
<dbReference type="eggNOG" id="COG0194">
    <property type="taxonomic scope" value="Bacteria"/>
</dbReference>
<dbReference type="HOGENOM" id="CLU_001715_1_0_5"/>
<dbReference type="OrthoDB" id="9808150at2"/>
<dbReference type="GO" id="GO:0005829">
    <property type="term" value="C:cytosol"/>
    <property type="evidence" value="ECO:0007669"/>
    <property type="project" value="TreeGrafter"/>
</dbReference>
<dbReference type="GO" id="GO:0005524">
    <property type="term" value="F:ATP binding"/>
    <property type="evidence" value="ECO:0007669"/>
    <property type="project" value="UniProtKB-UniRule"/>
</dbReference>
<dbReference type="GO" id="GO:0004385">
    <property type="term" value="F:guanylate kinase activity"/>
    <property type="evidence" value="ECO:0007669"/>
    <property type="project" value="UniProtKB-UniRule"/>
</dbReference>
<dbReference type="CDD" id="cd00071">
    <property type="entry name" value="GMPK"/>
    <property type="match status" value="1"/>
</dbReference>
<dbReference type="FunFam" id="3.30.63.10:FF:000002">
    <property type="entry name" value="Guanylate kinase 1"/>
    <property type="match status" value="1"/>
</dbReference>
<dbReference type="Gene3D" id="3.30.63.10">
    <property type="entry name" value="Guanylate Kinase phosphate binding domain"/>
    <property type="match status" value="1"/>
</dbReference>
<dbReference type="Gene3D" id="3.40.50.300">
    <property type="entry name" value="P-loop containing nucleotide triphosphate hydrolases"/>
    <property type="match status" value="2"/>
</dbReference>
<dbReference type="HAMAP" id="MF_00328">
    <property type="entry name" value="Guanylate_kinase"/>
    <property type="match status" value="1"/>
</dbReference>
<dbReference type="InterPro" id="IPR008145">
    <property type="entry name" value="GK/Ca_channel_bsu"/>
</dbReference>
<dbReference type="InterPro" id="IPR008144">
    <property type="entry name" value="Guanylate_kin-like_dom"/>
</dbReference>
<dbReference type="InterPro" id="IPR017665">
    <property type="entry name" value="Guanylate_kinase"/>
</dbReference>
<dbReference type="InterPro" id="IPR020590">
    <property type="entry name" value="Guanylate_kinase_CS"/>
</dbReference>
<dbReference type="InterPro" id="IPR027417">
    <property type="entry name" value="P-loop_NTPase"/>
</dbReference>
<dbReference type="NCBIfam" id="TIGR03263">
    <property type="entry name" value="guanyl_kin"/>
    <property type="match status" value="1"/>
</dbReference>
<dbReference type="PANTHER" id="PTHR23117:SF13">
    <property type="entry name" value="GUANYLATE KINASE"/>
    <property type="match status" value="1"/>
</dbReference>
<dbReference type="PANTHER" id="PTHR23117">
    <property type="entry name" value="GUANYLATE KINASE-RELATED"/>
    <property type="match status" value="1"/>
</dbReference>
<dbReference type="Pfam" id="PF00625">
    <property type="entry name" value="Guanylate_kin"/>
    <property type="match status" value="1"/>
</dbReference>
<dbReference type="SMART" id="SM00072">
    <property type="entry name" value="GuKc"/>
    <property type="match status" value="1"/>
</dbReference>
<dbReference type="SUPFAM" id="SSF52540">
    <property type="entry name" value="P-loop containing nucleoside triphosphate hydrolases"/>
    <property type="match status" value="1"/>
</dbReference>
<dbReference type="PROSITE" id="PS00856">
    <property type="entry name" value="GUANYLATE_KINASE_1"/>
    <property type="match status" value="1"/>
</dbReference>
<dbReference type="PROSITE" id="PS50052">
    <property type="entry name" value="GUANYLATE_KINASE_2"/>
    <property type="match status" value="1"/>
</dbReference>